<protein>
    <recommendedName>
        <fullName evidence="5">bZIP transcription factor TRAB1</fullName>
    </recommendedName>
    <alternativeName>
        <fullName evidence="5">Protein ABA RESPONSIVE ELEMENT 1</fullName>
    </alternativeName>
</protein>
<dbReference type="EMBL" id="AB023288">
    <property type="protein sequence ID" value="BAA83740.1"/>
    <property type="status" value="ALT_INIT"/>
    <property type="molecule type" value="mRNA"/>
</dbReference>
<dbReference type="EMBL" id="AY072713">
    <property type="protein sequence ID" value="AAL86016.1"/>
    <property type="status" value="ALT_INIT"/>
    <property type="molecule type" value="mRNA"/>
</dbReference>
<dbReference type="EMBL" id="AY323482">
    <property type="protein sequence ID" value="AAP92748.1"/>
    <property type="status" value="ALT_INIT"/>
    <property type="molecule type" value="mRNA"/>
</dbReference>
<dbReference type="EMBL" id="AP004457">
    <property type="protein sequence ID" value="BAD09357.1"/>
    <property type="status" value="ALT_INIT"/>
    <property type="molecule type" value="Genomic_DNA"/>
</dbReference>
<dbReference type="EMBL" id="AP008214">
    <property type="protein sequence ID" value="BAF23932.1"/>
    <property type="status" value="ALT_INIT"/>
    <property type="molecule type" value="Genomic_DNA"/>
</dbReference>
<dbReference type="EMBL" id="AP014964">
    <property type="protein sequence ID" value="BAT05851.1"/>
    <property type="status" value="ALT_SEQ"/>
    <property type="molecule type" value="Genomic_DNA"/>
</dbReference>
<dbReference type="EMBL" id="AP014964">
    <property type="protein sequence ID" value="BAT05852.1"/>
    <property type="status" value="ALT_SEQ"/>
    <property type="molecule type" value="Genomic_DNA"/>
</dbReference>
<dbReference type="RefSeq" id="XP_015650926.1">
    <property type="nucleotide sequence ID" value="XM_015795440.1"/>
</dbReference>
<dbReference type="SMR" id="Q6ZDF3"/>
<dbReference type="FunCoup" id="Q6ZDF3">
    <property type="interactions" value="145"/>
</dbReference>
<dbReference type="IntAct" id="Q6ZDF3">
    <property type="interactions" value="1"/>
</dbReference>
<dbReference type="STRING" id="39947.Q6ZDF3"/>
<dbReference type="PaxDb" id="39947-Q6ZDF3"/>
<dbReference type="KEGG" id="dosa:Os08g0472000"/>
<dbReference type="eggNOG" id="ENOG502QPP6">
    <property type="taxonomic scope" value="Eukaryota"/>
</dbReference>
<dbReference type="HOGENOM" id="CLU_043238_1_1_1"/>
<dbReference type="InParanoid" id="Q6ZDF3"/>
<dbReference type="OrthoDB" id="1927218at2759"/>
<dbReference type="Proteomes" id="UP000000763">
    <property type="component" value="Chromosome 8"/>
</dbReference>
<dbReference type="Proteomes" id="UP000059680">
    <property type="component" value="Chromosome 8"/>
</dbReference>
<dbReference type="GO" id="GO:0005634">
    <property type="term" value="C:nucleus"/>
    <property type="evidence" value="ECO:0000318"/>
    <property type="project" value="GO_Central"/>
</dbReference>
<dbReference type="GO" id="GO:0003700">
    <property type="term" value="F:DNA-binding transcription factor activity"/>
    <property type="evidence" value="ECO:0000314"/>
    <property type="project" value="UniProtKB"/>
</dbReference>
<dbReference type="GO" id="GO:0000976">
    <property type="term" value="F:transcription cis-regulatory region binding"/>
    <property type="evidence" value="ECO:0000314"/>
    <property type="project" value="UniProtKB"/>
</dbReference>
<dbReference type="GO" id="GO:0009738">
    <property type="term" value="P:abscisic acid-activated signaling pathway"/>
    <property type="evidence" value="ECO:0000314"/>
    <property type="project" value="UniProtKB"/>
</dbReference>
<dbReference type="GO" id="GO:0045893">
    <property type="term" value="P:positive regulation of DNA-templated transcription"/>
    <property type="evidence" value="ECO:0007669"/>
    <property type="project" value="InterPro"/>
</dbReference>
<dbReference type="GO" id="GO:0006355">
    <property type="term" value="P:regulation of DNA-templated transcription"/>
    <property type="evidence" value="ECO:0000314"/>
    <property type="project" value="UniProtKB"/>
</dbReference>
<dbReference type="CDD" id="cd14707">
    <property type="entry name" value="bZIP_plant_BZIP46"/>
    <property type="match status" value="1"/>
</dbReference>
<dbReference type="FunFam" id="1.20.5.170:FF:000048">
    <property type="entry name" value="ABSCISIC ACID-INSENSITIVE 5-like protein 5"/>
    <property type="match status" value="1"/>
</dbReference>
<dbReference type="Gene3D" id="1.20.5.170">
    <property type="match status" value="1"/>
</dbReference>
<dbReference type="InterPro" id="IPR004827">
    <property type="entry name" value="bZIP"/>
</dbReference>
<dbReference type="InterPro" id="IPR043452">
    <property type="entry name" value="BZIP46-like"/>
</dbReference>
<dbReference type="InterPro" id="IPR046347">
    <property type="entry name" value="bZIP_sf"/>
</dbReference>
<dbReference type="PANTHER" id="PTHR22952:SF463">
    <property type="entry name" value="ABSCISIC ACID-INSENSITIVE 5-LIKE PROTEIN 7"/>
    <property type="match status" value="1"/>
</dbReference>
<dbReference type="PANTHER" id="PTHR22952">
    <property type="entry name" value="CAMP-RESPONSE ELEMENT BINDING PROTEIN-RELATED"/>
    <property type="match status" value="1"/>
</dbReference>
<dbReference type="Pfam" id="PF00170">
    <property type="entry name" value="bZIP_1"/>
    <property type="match status" value="1"/>
</dbReference>
<dbReference type="SMART" id="SM00338">
    <property type="entry name" value="BRLZ"/>
    <property type="match status" value="1"/>
</dbReference>
<dbReference type="SUPFAM" id="SSF57959">
    <property type="entry name" value="Leucine zipper domain"/>
    <property type="match status" value="1"/>
</dbReference>
<dbReference type="PROSITE" id="PS50217">
    <property type="entry name" value="BZIP"/>
    <property type="match status" value="1"/>
</dbReference>
<dbReference type="PROSITE" id="PS00036">
    <property type="entry name" value="BZIP_BASIC"/>
    <property type="match status" value="1"/>
</dbReference>
<name>TRAB1_ORYSJ</name>
<proteinExistence type="evidence at protein level"/>
<gene>
    <name evidence="4" type="primary">TRAB1</name>
    <name evidence="6" type="synonym">ABA1</name>
    <name evidence="8" type="ordered locus">Os08g0472000</name>
    <name evidence="5" type="ordered locus">LOC_Os08g36790</name>
    <name evidence="7" type="ORF">P0013B04.7</name>
</gene>
<reference key="1">
    <citation type="journal article" date="2005" name="Nature">
        <title>The map-based sequence of the rice genome.</title>
        <authorList>
            <consortium name="International rice genome sequencing project (IRGSP)"/>
        </authorList>
    </citation>
    <scope>NUCLEOTIDE SEQUENCE [LARGE SCALE GENOMIC DNA]</scope>
    <source>
        <strain>cv. Nipponbare</strain>
    </source>
</reference>
<reference key="2">
    <citation type="journal article" date="2008" name="Nucleic Acids Res.">
        <title>The rice annotation project database (RAP-DB): 2008 update.</title>
        <authorList>
            <consortium name="The rice annotation project (RAP)"/>
        </authorList>
    </citation>
    <scope>GENOME REANNOTATION</scope>
    <source>
        <strain>cv. Nipponbare</strain>
    </source>
</reference>
<reference key="3">
    <citation type="journal article" date="2013" name="Rice">
        <title>Improvement of the Oryza sativa Nipponbare reference genome using next generation sequence and optical map data.</title>
        <authorList>
            <person name="Kawahara Y."/>
            <person name="de la Bastide M."/>
            <person name="Hamilton J.P."/>
            <person name="Kanamori H."/>
            <person name="McCombie W.R."/>
            <person name="Ouyang S."/>
            <person name="Schwartz D.C."/>
            <person name="Tanaka T."/>
            <person name="Wu J."/>
            <person name="Zhou S."/>
            <person name="Childs K.L."/>
            <person name="Davidson R.M."/>
            <person name="Lin H."/>
            <person name="Quesada-Ocampo L."/>
            <person name="Vaillancourt B."/>
            <person name="Sakai H."/>
            <person name="Lee S.S."/>
            <person name="Kim J."/>
            <person name="Numa H."/>
            <person name="Itoh T."/>
            <person name="Buell C.R."/>
            <person name="Matsumoto T."/>
        </authorList>
    </citation>
    <scope>GENOME REANNOTATION</scope>
    <source>
        <strain>cv. Nipponbare</strain>
    </source>
</reference>
<reference key="4">
    <citation type="submission" date="2003-06" db="EMBL/GenBank/DDBJ databases">
        <title>A bZIP transcription factor may act as ABA signal.</title>
        <authorList>
            <person name="Quanhong Y."/>
            <person name="Rihe P."/>
            <person name="Aisheng X."/>
        </authorList>
    </citation>
    <scope>NUCLEOTIDE SEQUENCE [MRNA] OF 41-374 AND 285-374</scope>
</reference>
<reference key="5">
    <citation type="journal article" date="1999" name="Proc. Natl. Acad. Sci. U.S.A.">
        <title>A bZIP factor, TRAB1, interacts with VP1 and mediates abscisic acid-induced transcription.</title>
        <authorList>
            <person name="Hobo T."/>
            <person name="Kowyama Y."/>
            <person name="Hattori T."/>
        </authorList>
    </citation>
    <scope>NUCLEOTIDE SEQUENCE [MRNA] OF 53-374</scope>
    <scope>FUNCTION</scope>
    <scope>TISSUE SPECIFICITY</scope>
    <scope>INDUCTION</scope>
    <scope>INTERACTION WITH VP1</scope>
    <source>
        <strain>cv. Nipponbare</strain>
    </source>
</reference>
<evidence type="ECO:0000255" key="1">
    <source>
        <dbReference type="PROSITE-ProRule" id="PRU00978"/>
    </source>
</evidence>
<evidence type="ECO:0000256" key="2">
    <source>
        <dbReference type="SAM" id="MobiDB-lite"/>
    </source>
</evidence>
<evidence type="ECO:0000269" key="3">
    <source>
    </source>
</evidence>
<evidence type="ECO:0000303" key="4">
    <source>
    </source>
</evidence>
<evidence type="ECO:0000305" key="5"/>
<evidence type="ECO:0000312" key="6">
    <source>
        <dbReference type="EMBL" id="AAP92748.1"/>
    </source>
</evidence>
<evidence type="ECO:0000312" key="7">
    <source>
        <dbReference type="EMBL" id="BAD09357.1"/>
    </source>
</evidence>
<evidence type="ECO:0000312" key="8">
    <source>
        <dbReference type="EMBL" id="BAT05851.1"/>
    </source>
</evidence>
<feature type="chain" id="PRO_0000377394" description="bZIP transcription factor TRAB1">
    <location>
        <begin position="1"/>
        <end position="374"/>
    </location>
</feature>
<feature type="domain" description="bZIP" evidence="1">
    <location>
        <begin position="286"/>
        <end position="349"/>
    </location>
</feature>
<feature type="region of interest" description="Disordered" evidence="2">
    <location>
        <begin position="1"/>
        <end position="23"/>
    </location>
</feature>
<feature type="region of interest" description="Disordered" evidence="2">
    <location>
        <begin position="117"/>
        <end position="142"/>
    </location>
</feature>
<feature type="region of interest" description="Basic motif" evidence="1">
    <location>
        <begin position="288"/>
        <end position="307"/>
    </location>
</feature>
<feature type="region of interest" description="Leucine-zipper" evidence="1">
    <location>
        <begin position="314"/>
        <end position="335"/>
    </location>
</feature>
<feature type="compositionally biased region" description="Basic and acidic residues" evidence="2">
    <location>
        <begin position="1"/>
        <end position="13"/>
    </location>
</feature>
<feature type="compositionally biased region" description="Low complexity" evidence="2">
    <location>
        <begin position="14"/>
        <end position="23"/>
    </location>
</feature>
<feature type="sequence conflict" description="In Ref. 5; BAA83740 and 4; AAP92748." evidence="5" ref="5 4">
    <original>QR</original>
    <variation>HK</variation>
    <location>
        <begin position="90"/>
        <end position="91"/>
    </location>
</feature>
<feature type="sequence conflict" description="In Ref. 5; BAA83740 and 4; AAP92748." evidence="5" ref="5 4">
    <original>E</original>
    <variation>Q</variation>
    <location>
        <position position="114"/>
    </location>
</feature>
<feature type="sequence conflict" description="In Ref. 5; BAA83740 and 4; AAP92748." evidence="5" ref="5 4">
    <original>QQ</original>
    <variation>HH</variation>
    <location>
        <begin position="133"/>
        <end position="134"/>
    </location>
</feature>
<keyword id="KW-0938">Abscisic acid signaling pathway</keyword>
<keyword id="KW-0010">Activator</keyword>
<keyword id="KW-0238">DNA-binding</keyword>
<keyword id="KW-0539">Nucleus</keyword>
<keyword id="KW-1185">Reference proteome</keyword>
<keyword id="KW-0804">Transcription</keyword>
<keyword id="KW-0805">Transcription regulation</keyword>
<organism>
    <name type="scientific">Oryza sativa subsp. japonica</name>
    <name type="common">Rice</name>
    <dbReference type="NCBI Taxonomy" id="39947"/>
    <lineage>
        <taxon>Eukaryota</taxon>
        <taxon>Viridiplantae</taxon>
        <taxon>Streptophyta</taxon>
        <taxon>Embryophyta</taxon>
        <taxon>Tracheophyta</taxon>
        <taxon>Spermatophyta</taxon>
        <taxon>Magnoliopsida</taxon>
        <taxon>Liliopsida</taxon>
        <taxon>Poales</taxon>
        <taxon>Poaceae</taxon>
        <taxon>BOP clade</taxon>
        <taxon>Oryzoideae</taxon>
        <taxon>Oryzeae</taxon>
        <taxon>Oryzinae</taxon>
        <taxon>Oryza</taxon>
        <taxon>Oryza sativa</taxon>
    </lineage>
</organism>
<sequence>MDLKDGGGSERRGAAAGAGAGAAPLARQGSIYSLTFDEFQSTLGGMGGGLGKDFGSMNMDELLRSIWTAEESQAMASASAAAAAAEGGLQRQGSLTLPRTLSVKTVDEVWRDLEREASPGAAAADGGGGGGEQQQPRRQPTLGEMTLEEFLVRAGVVRENTAAAAAMVAAAAAPPVAPRSIPAVNNSSIFFGNYGGVNDAAAAAAGAMGFSPVGIGDPTMGNRLMSGVAGIGGGAITVAPVDTSVGQMDSAGKGDGDLSSPMAPVPYPFEGVIRGRRSGGNVEKVVERRQRRMIKNRESAARSRARKQAYTMELEAEVQKLKEQNMELQKKQEEIMEMQKNFFPEMQKNQVLEAVNNPYGQKKRCLRRTLTGPW</sequence>
<comment type="function">
    <text evidence="3">Transcription activator that mediates abscisic acid (ABA) signaling. Binds specifically to the ABA-responsive element (ABRE) of the EMP1 and RAB16A gene promoters.</text>
</comment>
<comment type="subunit">
    <text evidence="3">Interacts with VP1 (via N-terminus).</text>
</comment>
<comment type="subcellular location">
    <subcellularLocation>
        <location evidence="5">Nucleus</location>
    </subcellularLocation>
</comment>
<comment type="tissue specificity">
    <text evidence="3">Expressed in roots, leaves and embryos.</text>
</comment>
<comment type="induction">
    <text evidence="3">By abscisic acid (ABA).</text>
</comment>
<comment type="similarity">
    <text evidence="5">Belongs to the bZIP family.</text>
</comment>
<comment type="sequence caution" evidence="5">
    <conflict type="erroneous initiation">
        <sequence resource="EMBL-CDS" id="AAL86016"/>
    </conflict>
    <text>Truncated N-terminus.</text>
</comment>
<comment type="sequence caution" evidence="5">
    <conflict type="erroneous initiation">
        <sequence resource="EMBL-CDS" id="AAP92748"/>
    </conflict>
    <text>Truncated N-terminus.</text>
</comment>
<comment type="sequence caution" evidence="5">
    <conflict type="erroneous initiation">
        <sequence resource="EMBL-CDS" id="BAA83740"/>
    </conflict>
    <text>Truncated N-terminus.</text>
</comment>
<comment type="sequence caution" evidence="5">
    <conflict type="erroneous initiation">
        <sequence resource="EMBL-CDS" id="BAD09357"/>
    </conflict>
    <text>Truncated N-terminus.</text>
</comment>
<comment type="sequence caution" evidence="5">
    <conflict type="erroneous initiation">
        <sequence resource="EMBL-CDS" id="BAF23932"/>
    </conflict>
    <text>Truncated N-terminus.</text>
</comment>
<comment type="sequence caution" evidence="5">
    <conflict type="erroneous gene model prediction">
        <sequence resource="EMBL-CDS" id="BAT05851"/>
    </conflict>
</comment>
<comment type="sequence caution" evidence="5">
    <conflict type="erroneous gene model prediction">
        <sequence resource="EMBL-CDS" id="BAT05852"/>
    </conflict>
</comment>
<accession>Q6ZDF3</accession>
<accession>A0A0P0XGN7</accession>
<accession>A0A0P0XH09</accession>
<accession>Q7X974</accession>
<accession>Q8RYA2</accession>
<accession>Q9SLX6</accession>